<feature type="chain" id="PRO_0000230018" description="Gamma-glutamyl phosphate reductase">
    <location>
        <begin position="1"/>
        <end position="430"/>
    </location>
</feature>
<proteinExistence type="inferred from homology"/>
<organism>
    <name type="scientific">Psychrobacter arcticus (strain DSM 17307 / VKM B-2377 / 273-4)</name>
    <dbReference type="NCBI Taxonomy" id="259536"/>
    <lineage>
        <taxon>Bacteria</taxon>
        <taxon>Pseudomonadati</taxon>
        <taxon>Pseudomonadota</taxon>
        <taxon>Gammaproteobacteria</taxon>
        <taxon>Moraxellales</taxon>
        <taxon>Moraxellaceae</taxon>
        <taxon>Psychrobacter</taxon>
    </lineage>
</organism>
<keyword id="KW-0028">Amino-acid biosynthesis</keyword>
<keyword id="KW-0963">Cytoplasm</keyword>
<keyword id="KW-0521">NADP</keyword>
<keyword id="KW-0560">Oxidoreductase</keyword>
<keyword id="KW-0641">Proline biosynthesis</keyword>
<keyword id="KW-1185">Reference proteome</keyword>
<name>PROA_PSYA2</name>
<comment type="function">
    <text evidence="1">Catalyzes the NADPH-dependent reduction of L-glutamate 5-phosphate into L-glutamate 5-semialdehyde and phosphate. The product spontaneously undergoes cyclization to form 1-pyrroline-5-carboxylate.</text>
</comment>
<comment type="catalytic activity">
    <reaction evidence="1">
        <text>L-glutamate 5-semialdehyde + phosphate + NADP(+) = L-glutamyl 5-phosphate + NADPH + H(+)</text>
        <dbReference type="Rhea" id="RHEA:19541"/>
        <dbReference type="ChEBI" id="CHEBI:15378"/>
        <dbReference type="ChEBI" id="CHEBI:43474"/>
        <dbReference type="ChEBI" id="CHEBI:57783"/>
        <dbReference type="ChEBI" id="CHEBI:58066"/>
        <dbReference type="ChEBI" id="CHEBI:58274"/>
        <dbReference type="ChEBI" id="CHEBI:58349"/>
        <dbReference type="EC" id="1.2.1.41"/>
    </reaction>
</comment>
<comment type="pathway">
    <text evidence="1">Amino-acid biosynthesis; L-proline biosynthesis; L-glutamate 5-semialdehyde from L-glutamate: step 2/2.</text>
</comment>
<comment type="subcellular location">
    <subcellularLocation>
        <location evidence="1">Cytoplasm</location>
    </subcellularLocation>
</comment>
<comment type="similarity">
    <text evidence="1">Belongs to the gamma-glutamyl phosphate reductase family.</text>
</comment>
<comment type="sequence caution" evidence="2">
    <conflict type="erroneous initiation">
        <sequence resource="EMBL-CDS" id="AAZ18163"/>
    </conflict>
</comment>
<sequence>MNTADITAYMQNVGKEARAASRALAAANTGDKNAALMAIHDVLKNAKQDILSANKIDMDNGQKNDLDAALLDRLELNDARFDGMLQGLKDVAALPDPIGEVTDMTYRPSGIHLGKMRVPLGVVGMIYESRPNVTLEAASLALKSGNAIILRGGSEAFESNQAIAKCILEGLKKVGMSEYSVQVLETTDRAAVGELITMTDYVDVIVPRGGKGLIERISRDARVPVIKHLDGNCHTFIDSDADPEIAIKVSVNAKTHRYGTCNTMETLLVDEAIANELLPKIAEAIVKADDAMQLRLDDKAQAILNDNTTLKGHLSAATAEDWDTEYLAPILAIKILSGIDEAIEHINTHGSHHTDVIITDNYTKSQRFIREVDSASVMINASSRFADGFEYGLGAEIGISTDKIHARGPVGLEGLTSQKWIVYGHGETRA</sequence>
<accession>Q4FUZ5</accession>
<dbReference type="EC" id="1.2.1.41" evidence="1"/>
<dbReference type="EMBL" id="CP000082">
    <property type="protein sequence ID" value="AAZ18163.1"/>
    <property type="status" value="ALT_INIT"/>
    <property type="molecule type" value="Genomic_DNA"/>
</dbReference>
<dbReference type="RefSeq" id="WP_011279601.1">
    <property type="nucleotide sequence ID" value="NC_007204.1"/>
</dbReference>
<dbReference type="SMR" id="Q4FUZ5"/>
<dbReference type="STRING" id="259536.Psyc_0293"/>
<dbReference type="KEGG" id="par:Psyc_0293"/>
<dbReference type="eggNOG" id="COG0014">
    <property type="taxonomic scope" value="Bacteria"/>
</dbReference>
<dbReference type="HOGENOM" id="CLU_030231_0_0_6"/>
<dbReference type="OrthoDB" id="9809970at2"/>
<dbReference type="UniPathway" id="UPA00098">
    <property type="reaction ID" value="UER00360"/>
</dbReference>
<dbReference type="Proteomes" id="UP000000546">
    <property type="component" value="Chromosome"/>
</dbReference>
<dbReference type="GO" id="GO:0005737">
    <property type="term" value="C:cytoplasm"/>
    <property type="evidence" value="ECO:0007669"/>
    <property type="project" value="UniProtKB-SubCell"/>
</dbReference>
<dbReference type="GO" id="GO:0004350">
    <property type="term" value="F:glutamate-5-semialdehyde dehydrogenase activity"/>
    <property type="evidence" value="ECO:0007669"/>
    <property type="project" value="UniProtKB-UniRule"/>
</dbReference>
<dbReference type="GO" id="GO:0050661">
    <property type="term" value="F:NADP binding"/>
    <property type="evidence" value="ECO:0007669"/>
    <property type="project" value="InterPro"/>
</dbReference>
<dbReference type="GO" id="GO:0055129">
    <property type="term" value="P:L-proline biosynthetic process"/>
    <property type="evidence" value="ECO:0007669"/>
    <property type="project" value="UniProtKB-UniRule"/>
</dbReference>
<dbReference type="CDD" id="cd07079">
    <property type="entry name" value="ALDH_F18-19_ProA-GPR"/>
    <property type="match status" value="1"/>
</dbReference>
<dbReference type="FunFam" id="3.40.309.10:FF:000006">
    <property type="entry name" value="Gamma-glutamyl phosphate reductase"/>
    <property type="match status" value="1"/>
</dbReference>
<dbReference type="Gene3D" id="3.40.605.10">
    <property type="entry name" value="Aldehyde Dehydrogenase, Chain A, domain 1"/>
    <property type="match status" value="1"/>
</dbReference>
<dbReference type="Gene3D" id="3.40.309.10">
    <property type="entry name" value="Aldehyde Dehydrogenase, Chain A, domain 2"/>
    <property type="match status" value="1"/>
</dbReference>
<dbReference type="HAMAP" id="MF_00412">
    <property type="entry name" value="ProA"/>
    <property type="match status" value="1"/>
</dbReference>
<dbReference type="InterPro" id="IPR016161">
    <property type="entry name" value="Ald_DH/histidinol_DH"/>
</dbReference>
<dbReference type="InterPro" id="IPR016163">
    <property type="entry name" value="Ald_DH_C"/>
</dbReference>
<dbReference type="InterPro" id="IPR016162">
    <property type="entry name" value="Ald_DH_N"/>
</dbReference>
<dbReference type="InterPro" id="IPR015590">
    <property type="entry name" value="Aldehyde_DH_dom"/>
</dbReference>
<dbReference type="InterPro" id="IPR012134">
    <property type="entry name" value="Glu-5-SA_DH"/>
</dbReference>
<dbReference type="InterPro" id="IPR000965">
    <property type="entry name" value="GPR_dom"/>
</dbReference>
<dbReference type="NCBIfam" id="NF001221">
    <property type="entry name" value="PRK00197.1"/>
    <property type="match status" value="1"/>
</dbReference>
<dbReference type="NCBIfam" id="TIGR00407">
    <property type="entry name" value="proA"/>
    <property type="match status" value="1"/>
</dbReference>
<dbReference type="PANTHER" id="PTHR11063:SF8">
    <property type="entry name" value="DELTA-1-PYRROLINE-5-CARBOXYLATE SYNTHASE"/>
    <property type="match status" value="1"/>
</dbReference>
<dbReference type="PANTHER" id="PTHR11063">
    <property type="entry name" value="GLUTAMATE SEMIALDEHYDE DEHYDROGENASE"/>
    <property type="match status" value="1"/>
</dbReference>
<dbReference type="Pfam" id="PF00171">
    <property type="entry name" value="Aldedh"/>
    <property type="match status" value="2"/>
</dbReference>
<dbReference type="PIRSF" id="PIRSF000151">
    <property type="entry name" value="GPR"/>
    <property type="match status" value="1"/>
</dbReference>
<dbReference type="SUPFAM" id="SSF53720">
    <property type="entry name" value="ALDH-like"/>
    <property type="match status" value="1"/>
</dbReference>
<evidence type="ECO:0000255" key="1">
    <source>
        <dbReference type="HAMAP-Rule" id="MF_00412"/>
    </source>
</evidence>
<evidence type="ECO:0000305" key="2"/>
<protein>
    <recommendedName>
        <fullName evidence="1">Gamma-glutamyl phosphate reductase</fullName>
        <shortName evidence="1">GPR</shortName>
        <ecNumber evidence="1">1.2.1.41</ecNumber>
    </recommendedName>
    <alternativeName>
        <fullName evidence="1">Glutamate-5-semialdehyde dehydrogenase</fullName>
    </alternativeName>
    <alternativeName>
        <fullName evidence="1">Glutamyl-gamma-semialdehyde dehydrogenase</fullName>
        <shortName evidence="1">GSA dehydrogenase</shortName>
    </alternativeName>
</protein>
<gene>
    <name evidence="1" type="primary">proA</name>
    <name type="ordered locus">Psyc_0293</name>
</gene>
<reference key="1">
    <citation type="journal article" date="2010" name="Appl. Environ. Microbiol.">
        <title>The genome sequence of Psychrobacter arcticus 273-4, a psychroactive Siberian permafrost bacterium, reveals mechanisms for adaptation to low-temperature growth.</title>
        <authorList>
            <person name="Ayala-del-Rio H.L."/>
            <person name="Chain P.S."/>
            <person name="Grzymski J.J."/>
            <person name="Ponder M.A."/>
            <person name="Ivanova N."/>
            <person name="Bergholz P.W."/>
            <person name="Di Bartolo G."/>
            <person name="Hauser L."/>
            <person name="Land M."/>
            <person name="Bakermans C."/>
            <person name="Rodrigues D."/>
            <person name="Klappenbach J."/>
            <person name="Zarka D."/>
            <person name="Larimer F."/>
            <person name="Richardson P."/>
            <person name="Murray A."/>
            <person name="Thomashow M."/>
            <person name="Tiedje J.M."/>
        </authorList>
    </citation>
    <scope>NUCLEOTIDE SEQUENCE [LARGE SCALE GENOMIC DNA]</scope>
    <source>
        <strain>DSM 17307 / VKM B-2377 / 273-4</strain>
    </source>
</reference>